<organism>
    <name type="scientific">Mycolicibacterium smegmatis (strain ATCC 700084 / mc(2)155)</name>
    <name type="common">Mycobacterium smegmatis</name>
    <dbReference type="NCBI Taxonomy" id="246196"/>
    <lineage>
        <taxon>Bacteria</taxon>
        <taxon>Bacillati</taxon>
        <taxon>Actinomycetota</taxon>
        <taxon>Actinomycetes</taxon>
        <taxon>Mycobacteriales</taxon>
        <taxon>Mycobacteriaceae</taxon>
        <taxon>Mycolicibacterium</taxon>
    </lineage>
</organism>
<comment type="catalytic activity">
    <reaction evidence="1">
        <text>acetaldehyde + NAD(+) + CoA = acetyl-CoA + NADH + H(+)</text>
        <dbReference type="Rhea" id="RHEA:23288"/>
        <dbReference type="ChEBI" id="CHEBI:15343"/>
        <dbReference type="ChEBI" id="CHEBI:15378"/>
        <dbReference type="ChEBI" id="CHEBI:57287"/>
        <dbReference type="ChEBI" id="CHEBI:57288"/>
        <dbReference type="ChEBI" id="CHEBI:57540"/>
        <dbReference type="ChEBI" id="CHEBI:57945"/>
        <dbReference type="EC" id="1.2.1.10"/>
    </reaction>
</comment>
<comment type="similarity">
    <text evidence="1">Belongs to the acetaldehyde dehydrogenase family.</text>
</comment>
<comment type="sequence caution" evidence="2">
    <conflict type="erroneous initiation">
        <sequence resource="EMBL-CDS" id="ABK73662"/>
    </conflict>
</comment>
<proteinExistence type="inferred from homology"/>
<feature type="chain" id="PRO_0000387681" description="Acetaldehyde dehydrogenase 2">
    <location>
        <begin position="1"/>
        <end position="307"/>
    </location>
</feature>
<feature type="active site" description="Acyl-thioester intermediate" evidence="1">
    <location>
        <position position="127"/>
    </location>
</feature>
<feature type="binding site" evidence="1">
    <location>
        <begin position="12"/>
        <end position="15"/>
    </location>
    <ligand>
        <name>NAD(+)</name>
        <dbReference type="ChEBI" id="CHEBI:57540"/>
    </ligand>
</feature>
<feature type="binding site" evidence="1">
    <location>
        <begin position="158"/>
        <end position="166"/>
    </location>
    <ligand>
        <name>NAD(+)</name>
        <dbReference type="ChEBI" id="CHEBI:57540"/>
    </ligand>
</feature>
<feature type="binding site" evidence="1">
    <location>
        <position position="277"/>
    </location>
    <ligand>
        <name>NAD(+)</name>
        <dbReference type="ChEBI" id="CHEBI:57540"/>
    </ligand>
</feature>
<gene>
    <name type="primary">mhpF</name>
    <name type="ordered locus">MSMEG_5939</name>
    <name type="ordered locus">MSMEI_5779</name>
</gene>
<keyword id="KW-0058">Aromatic hydrocarbons catabolism</keyword>
<keyword id="KW-0520">NAD</keyword>
<keyword id="KW-0560">Oxidoreductase</keyword>
<keyword id="KW-1185">Reference proteome</keyword>
<sequence>MPKKSSVAIVGSGNISTDLLYKLLRSEWLEPRWMIGIDPESEGLARARKLGLETSAEGVDWLLAQSEKPDLVFEATSAYVHRDAAPRYEEAGIRAIDLTPAAVGPGVVPPANLRDHLDAPNVNMVTCGGQATIPIVHAVSRVVDVPYAEIVASVSSASAGPGTRANIDEFTKTTSAGVQNIGGAQRGKAIIVLNPAEPPMIMRDTIFCAIPEGADHDAITQSIKDVVAEVQTYVPGYRLLNEPQFDEPSVVNGGNHLVTTFVEVEGAGDYLPPYAGNLDIMTAAATKVGEEIAKKSAEASLASGAQA</sequence>
<accession>A0R4S7</accession>
<accession>I7G9C0</accession>
<name>ACDH2_MYCS2</name>
<evidence type="ECO:0000255" key="1">
    <source>
        <dbReference type="HAMAP-Rule" id="MF_01657"/>
    </source>
</evidence>
<evidence type="ECO:0000305" key="2"/>
<dbReference type="EC" id="1.2.1.10" evidence="1"/>
<dbReference type="EMBL" id="CP000480">
    <property type="protein sequence ID" value="ABK73662.1"/>
    <property type="status" value="ALT_INIT"/>
    <property type="molecule type" value="Genomic_DNA"/>
</dbReference>
<dbReference type="EMBL" id="CP001663">
    <property type="protein sequence ID" value="AFP42212.1"/>
    <property type="molecule type" value="Genomic_DNA"/>
</dbReference>
<dbReference type="RefSeq" id="WP_014878495.1">
    <property type="nucleotide sequence ID" value="NZ_SIJM01000017.1"/>
</dbReference>
<dbReference type="RefSeq" id="YP_890165.1">
    <property type="nucleotide sequence ID" value="NC_008596.1"/>
</dbReference>
<dbReference type="SMR" id="A0R4S7"/>
<dbReference type="STRING" id="246196.MSMEG_5939"/>
<dbReference type="PaxDb" id="246196-MSMEI_5779"/>
<dbReference type="KEGG" id="msb:LJ00_29365"/>
<dbReference type="KEGG" id="msg:MSMEI_5779"/>
<dbReference type="KEGG" id="msm:MSMEG_5939"/>
<dbReference type="PATRIC" id="fig|246196.19.peg.5778"/>
<dbReference type="eggNOG" id="COG4569">
    <property type="taxonomic scope" value="Bacteria"/>
</dbReference>
<dbReference type="OrthoDB" id="9786743at2"/>
<dbReference type="Proteomes" id="UP000000757">
    <property type="component" value="Chromosome"/>
</dbReference>
<dbReference type="Proteomes" id="UP000006158">
    <property type="component" value="Chromosome"/>
</dbReference>
<dbReference type="GO" id="GO:0008774">
    <property type="term" value="F:acetaldehyde dehydrogenase (acetylating) activity"/>
    <property type="evidence" value="ECO:0007669"/>
    <property type="project" value="UniProtKB-UniRule"/>
</dbReference>
<dbReference type="GO" id="GO:0051287">
    <property type="term" value="F:NAD binding"/>
    <property type="evidence" value="ECO:0007669"/>
    <property type="project" value="UniProtKB-UniRule"/>
</dbReference>
<dbReference type="GO" id="GO:0009056">
    <property type="term" value="P:catabolic process"/>
    <property type="evidence" value="ECO:0007669"/>
    <property type="project" value="UniProtKB-KW"/>
</dbReference>
<dbReference type="CDD" id="cd23933">
    <property type="entry name" value="ALDH_C"/>
    <property type="match status" value="1"/>
</dbReference>
<dbReference type="Gene3D" id="3.30.360.10">
    <property type="entry name" value="Dihydrodipicolinate Reductase, domain 2"/>
    <property type="match status" value="1"/>
</dbReference>
<dbReference type="Gene3D" id="3.40.50.720">
    <property type="entry name" value="NAD(P)-binding Rossmann-like Domain"/>
    <property type="match status" value="1"/>
</dbReference>
<dbReference type="HAMAP" id="MF_01657">
    <property type="entry name" value="Ac_ald_DH_ac"/>
    <property type="match status" value="1"/>
</dbReference>
<dbReference type="InterPro" id="IPR003361">
    <property type="entry name" value="Acetaldehyde_dehydrogenase"/>
</dbReference>
<dbReference type="InterPro" id="IPR015426">
    <property type="entry name" value="Acetylaldehyde_DH_C"/>
</dbReference>
<dbReference type="InterPro" id="IPR036291">
    <property type="entry name" value="NAD(P)-bd_dom_sf"/>
</dbReference>
<dbReference type="InterPro" id="IPR000534">
    <property type="entry name" value="Semialdehyde_DH_NAD-bd"/>
</dbReference>
<dbReference type="NCBIfam" id="TIGR03215">
    <property type="entry name" value="ac_ald_DH_ac"/>
    <property type="match status" value="1"/>
</dbReference>
<dbReference type="NCBIfam" id="NF006157">
    <property type="entry name" value="PRK08300.1"/>
    <property type="match status" value="1"/>
</dbReference>
<dbReference type="Pfam" id="PF09290">
    <property type="entry name" value="AcetDehyd-dimer"/>
    <property type="match status" value="1"/>
</dbReference>
<dbReference type="PIRSF" id="PIRSF015689">
    <property type="entry name" value="Actaldh_dh_actl"/>
    <property type="match status" value="1"/>
</dbReference>
<dbReference type="SMART" id="SM00859">
    <property type="entry name" value="Semialdhyde_dh"/>
    <property type="match status" value="1"/>
</dbReference>
<dbReference type="SUPFAM" id="SSF55347">
    <property type="entry name" value="Glyceraldehyde-3-phosphate dehydrogenase-like, C-terminal domain"/>
    <property type="match status" value="1"/>
</dbReference>
<dbReference type="SUPFAM" id="SSF51735">
    <property type="entry name" value="NAD(P)-binding Rossmann-fold domains"/>
    <property type="match status" value="1"/>
</dbReference>
<reference key="1">
    <citation type="submission" date="2006-10" db="EMBL/GenBank/DDBJ databases">
        <authorList>
            <person name="Fleischmann R.D."/>
            <person name="Dodson R.J."/>
            <person name="Haft D.H."/>
            <person name="Merkel J.S."/>
            <person name="Nelson W.C."/>
            <person name="Fraser C.M."/>
        </authorList>
    </citation>
    <scope>NUCLEOTIDE SEQUENCE [LARGE SCALE GENOMIC DNA]</scope>
    <source>
        <strain>ATCC 700084 / mc(2)155</strain>
    </source>
</reference>
<reference key="2">
    <citation type="journal article" date="2007" name="Genome Biol.">
        <title>Interrupted coding sequences in Mycobacterium smegmatis: authentic mutations or sequencing errors?</title>
        <authorList>
            <person name="Deshayes C."/>
            <person name="Perrodou E."/>
            <person name="Gallien S."/>
            <person name="Euphrasie D."/>
            <person name="Schaeffer C."/>
            <person name="Van-Dorsselaer A."/>
            <person name="Poch O."/>
            <person name="Lecompte O."/>
            <person name="Reyrat J.-M."/>
        </authorList>
    </citation>
    <scope>NUCLEOTIDE SEQUENCE [LARGE SCALE GENOMIC DNA]</scope>
    <source>
        <strain>ATCC 700084 / mc(2)155</strain>
    </source>
</reference>
<reference key="3">
    <citation type="journal article" date="2009" name="Genome Res.">
        <title>Ortho-proteogenomics: multiple proteomes investigation through orthology and a new MS-based protocol.</title>
        <authorList>
            <person name="Gallien S."/>
            <person name="Perrodou E."/>
            <person name="Carapito C."/>
            <person name="Deshayes C."/>
            <person name="Reyrat J.-M."/>
            <person name="Van Dorsselaer A."/>
            <person name="Poch O."/>
            <person name="Schaeffer C."/>
            <person name="Lecompte O."/>
        </authorList>
    </citation>
    <scope>NUCLEOTIDE SEQUENCE [LARGE SCALE GENOMIC DNA]</scope>
    <source>
        <strain>ATCC 700084 / mc(2)155</strain>
    </source>
</reference>
<protein>
    <recommendedName>
        <fullName evidence="1">Acetaldehyde dehydrogenase 2</fullName>
        <ecNumber evidence="1">1.2.1.10</ecNumber>
    </recommendedName>
    <alternativeName>
        <fullName evidence="1">Acetaldehyde dehydrogenase [acetylating] 2</fullName>
    </alternativeName>
</protein>